<gene>
    <name evidence="1" type="primary">argD</name>
    <name type="ordered locus">NMA1584</name>
</gene>
<reference key="1">
    <citation type="journal article" date="2000" name="Nature">
        <title>Complete DNA sequence of a serogroup A strain of Neisseria meningitidis Z2491.</title>
        <authorList>
            <person name="Parkhill J."/>
            <person name="Achtman M."/>
            <person name="James K.D."/>
            <person name="Bentley S.D."/>
            <person name="Churcher C.M."/>
            <person name="Klee S.R."/>
            <person name="Morelli G."/>
            <person name="Basham D."/>
            <person name="Brown D."/>
            <person name="Chillingworth T."/>
            <person name="Davies R.M."/>
            <person name="Davis P."/>
            <person name="Devlin K."/>
            <person name="Feltwell T."/>
            <person name="Hamlin N."/>
            <person name="Holroyd S."/>
            <person name="Jagels K."/>
            <person name="Leather S."/>
            <person name="Moule S."/>
            <person name="Mungall K.L."/>
            <person name="Quail M.A."/>
            <person name="Rajandream M.A."/>
            <person name="Rutherford K.M."/>
            <person name="Simmonds M."/>
            <person name="Skelton J."/>
            <person name="Whitehead S."/>
            <person name="Spratt B.G."/>
            <person name="Barrell B.G."/>
        </authorList>
    </citation>
    <scope>NUCLEOTIDE SEQUENCE [LARGE SCALE GENOMIC DNA]</scope>
    <source>
        <strain>DSM 15465 / Z2491</strain>
    </source>
</reference>
<dbReference type="EC" id="2.6.1.11" evidence="1"/>
<dbReference type="EMBL" id="AL157959">
    <property type="protein sequence ID" value="CAM08728.1"/>
    <property type="molecule type" value="Genomic_DNA"/>
</dbReference>
<dbReference type="PIR" id="C81851">
    <property type="entry name" value="C81851"/>
</dbReference>
<dbReference type="RefSeq" id="WP_002246941.1">
    <property type="nucleotide sequence ID" value="NC_003116.1"/>
</dbReference>
<dbReference type="SMR" id="Q9JTX9"/>
<dbReference type="EnsemblBacteria" id="CAM08728">
    <property type="protein sequence ID" value="CAM08728"/>
    <property type="gene ID" value="NMA1584"/>
</dbReference>
<dbReference type="KEGG" id="nma:NMA1584"/>
<dbReference type="HOGENOM" id="CLU_016922_10_1_4"/>
<dbReference type="UniPathway" id="UPA00068">
    <property type="reaction ID" value="UER00109"/>
</dbReference>
<dbReference type="Proteomes" id="UP000000626">
    <property type="component" value="Chromosome"/>
</dbReference>
<dbReference type="GO" id="GO:0005737">
    <property type="term" value="C:cytoplasm"/>
    <property type="evidence" value="ECO:0007669"/>
    <property type="project" value="UniProtKB-SubCell"/>
</dbReference>
<dbReference type="GO" id="GO:0042802">
    <property type="term" value="F:identical protein binding"/>
    <property type="evidence" value="ECO:0007669"/>
    <property type="project" value="TreeGrafter"/>
</dbReference>
<dbReference type="GO" id="GO:0003992">
    <property type="term" value="F:N2-acetyl-L-ornithine:2-oxoglutarate 5-aminotransferase activity"/>
    <property type="evidence" value="ECO:0007669"/>
    <property type="project" value="UniProtKB-UniRule"/>
</dbReference>
<dbReference type="GO" id="GO:0030170">
    <property type="term" value="F:pyridoxal phosphate binding"/>
    <property type="evidence" value="ECO:0007669"/>
    <property type="project" value="InterPro"/>
</dbReference>
<dbReference type="GO" id="GO:0006526">
    <property type="term" value="P:L-arginine biosynthetic process"/>
    <property type="evidence" value="ECO:0007669"/>
    <property type="project" value="UniProtKB-UniRule"/>
</dbReference>
<dbReference type="CDD" id="cd00610">
    <property type="entry name" value="OAT_like"/>
    <property type="match status" value="1"/>
</dbReference>
<dbReference type="FunFam" id="3.40.640.10:FF:000004">
    <property type="entry name" value="Acetylornithine aminotransferase"/>
    <property type="match status" value="1"/>
</dbReference>
<dbReference type="Gene3D" id="3.90.1150.10">
    <property type="entry name" value="Aspartate Aminotransferase, domain 1"/>
    <property type="match status" value="1"/>
</dbReference>
<dbReference type="Gene3D" id="3.40.640.10">
    <property type="entry name" value="Type I PLP-dependent aspartate aminotransferase-like (Major domain)"/>
    <property type="match status" value="1"/>
</dbReference>
<dbReference type="HAMAP" id="MF_01107">
    <property type="entry name" value="ArgD_aminotrans_3"/>
    <property type="match status" value="1"/>
</dbReference>
<dbReference type="InterPro" id="IPR017652">
    <property type="entry name" value="Ac/SucOrn_transaminase_bac"/>
</dbReference>
<dbReference type="InterPro" id="IPR004636">
    <property type="entry name" value="AcOrn/SuccOrn_fam"/>
</dbReference>
<dbReference type="InterPro" id="IPR005814">
    <property type="entry name" value="Aminotrans_3"/>
</dbReference>
<dbReference type="InterPro" id="IPR049704">
    <property type="entry name" value="Aminotrans_3_PPA_site"/>
</dbReference>
<dbReference type="InterPro" id="IPR050103">
    <property type="entry name" value="Class-III_PLP-dep_AT"/>
</dbReference>
<dbReference type="InterPro" id="IPR015424">
    <property type="entry name" value="PyrdxlP-dep_Trfase"/>
</dbReference>
<dbReference type="InterPro" id="IPR015421">
    <property type="entry name" value="PyrdxlP-dep_Trfase_major"/>
</dbReference>
<dbReference type="InterPro" id="IPR015422">
    <property type="entry name" value="PyrdxlP-dep_Trfase_small"/>
</dbReference>
<dbReference type="NCBIfam" id="TIGR03246">
    <property type="entry name" value="arg_catab_astC"/>
    <property type="match status" value="1"/>
</dbReference>
<dbReference type="NCBIfam" id="TIGR00707">
    <property type="entry name" value="argD"/>
    <property type="match status" value="1"/>
</dbReference>
<dbReference type="NCBIfam" id="NF002325">
    <property type="entry name" value="PRK01278.1"/>
    <property type="match status" value="1"/>
</dbReference>
<dbReference type="NCBIfam" id="NF003468">
    <property type="entry name" value="PRK05093.1"/>
    <property type="match status" value="1"/>
</dbReference>
<dbReference type="PANTHER" id="PTHR11986">
    <property type="entry name" value="AMINOTRANSFERASE CLASS III"/>
    <property type="match status" value="1"/>
</dbReference>
<dbReference type="PANTHER" id="PTHR11986:SF113">
    <property type="entry name" value="SUCCINYLORNITHINE TRANSAMINASE"/>
    <property type="match status" value="1"/>
</dbReference>
<dbReference type="Pfam" id="PF00202">
    <property type="entry name" value="Aminotran_3"/>
    <property type="match status" value="1"/>
</dbReference>
<dbReference type="PIRSF" id="PIRSF000521">
    <property type="entry name" value="Transaminase_4ab_Lys_Orn"/>
    <property type="match status" value="1"/>
</dbReference>
<dbReference type="SUPFAM" id="SSF53383">
    <property type="entry name" value="PLP-dependent transferases"/>
    <property type="match status" value="1"/>
</dbReference>
<dbReference type="PROSITE" id="PS00600">
    <property type="entry name" value="AA_TRANSFER_CLASS_3"/>
    <property type="match status" value="1"/>
</dbReference>
<comment type="catalytic activity">
    <reaction evidence="1">
        <text>N(2)-acetyl-L-ornithine + 2-oxoglutarate = N-acetyl-L-glutamate 5-semialdehyde + L-glutamate</text>
        <dbReference type="Rhea" id="RHEA:18049"/>
        <dbReference type="ChEBI" id="CHEBI:16810"/>
        <dbReference type="ChEBI" id="CHEBI:29123"/>
        <dbReference type="ChEBI" id="CHEBI:29985"/>
        <dbReference type="ChEBI" id="CHEBI:57805"/>
        <dbReference type="EC" id="2.6.1.11"/>
    </reaction>
</comment>
<comment type="cofactor">
    <cofactor evidence="1">
        <name>pyridoxal 5'-phosphate</name>
        <dbReference type="ChEBI" id="CHEBI:597326"/>
    </cofactor>
    <text evidence="1">Binds 1 pyridoxal phosphate per subunit.</text>
</comment>
<comment type="pathway">
    <text evidence="1">Amino-acid biosynthesis; L-arginine biosynthesis; N(2)-acetyl-L-ornithine from L-glutamate: step 4/4.</text>
</comment>
<comment type="subunit">
    <text evidence="1">Homodimer.</text>
</comment>
<comment type="subcellular location">
    <subcellularLocation>
        <location evidence="1">Cytoplasm</location>
    </subcellularLocation>
</comment>
<comment type="miscellaneous">
    <text evidence="1">May also have succinyldiaminopimelate aminotransferase activity, thus carrying out the corresponding step in lysine biosynthesis.</text>
</comment>
<comment type="similarity">
    <text evidence="1">Belongs to the class-III pyridoxal-phosphate-dependent aminotransferase family. ArgD subfamily.</text>
</comment>
<proteinExistence type="inferred from homology"/>
<protein>
    <recommendedName>
        <fullName evidence="1">Acetylornithine aminotransferase</fullName>
        <shortName evidence="1">ACOAT</shortName>
        <ecNumber evidence="1">2.6.1.11</ecNumber>
    </recommendedName>
</protein>
<feature type="chain" id="PRO_0000112759" description="Acetylornithine aminotransferase">
    <location>
        <begin position="1"/>
        <end position="397"/>
    </location>
</feature>
<feature type="binding site" evidence="1">
    <location>
        <position position="129"/>
    </location>
    <ligand>
        <name>pyridoxal 5'-phosphate</name>
        <dbReference type="ChEBI" id="CHEBI:597326"/>
    </ligand>
</feature>
<feature type="binding site" evidence="1">
    <location>
        <position position="132"/>
    </location>
    <ligand>
        <name>N(2)-acetyl-L-ornithine</name>
        <dbReference type="ChEBI" id="CHEBI:57805"/>
    </ligand>
</feature>
<feature type="binding site" evidence="1">
    <location>
        <begin position="214"/>
        <end position="217"/>
    </location>
    <ligand>
        <name>pyridoxal 5'-phosphate</name>
        <dbReference type="ChEBI" id="CHEBI:597326"/>
    </ligand>
</feature>
<feature type="binding site" evidence="1">
    <location>
        <position position="271"/>
    </location>
    <ligand>
        <name>N(2)-acetyl-L-ornithine</name>
        <dbReference type="ChEBI" id="CHEBI:57805"/>
    </ligand>
</feature>
<feature type="binding site" evidence="1">
    <location>
        <position position="272"/>
    </location>
    <ligand>
        <name>pyridoxal 5'-phosphate</name>
        <dbReference type="ChEBI" id="CHEBI:597326"/>
    </ligand>
</feature>
<feature type="modified residue" description="N6-(pyridoxal phosphate)lysine" evidence="1">
    <location>
        <position position="243"/>
    </location>
</feature>
<keyword id="KW-0028">Amino-acid biosynthesis</keyword>
<keyword id="KW-0032">Aminotransferase</keyword>
<keyword id="KW-0055">Arginine biosynthesis</keyword>
<keyword id="KW-0963">Cytoplasm</keyword>
<keyword id="KW-0663">Pyridoxal phosphate</keyword>
<keyword id="KW-0808">Transferase</keyword>
<evidence type="ECO:0000255" key="1">
    <source>
        <dbReference type="HAMAP-Rule" id="MF_01107"/>
    </source>
</evidence>
<name>ARGD_NEIMA</name>
<organism>
    <name type="scientific">Neisseria meningitidis serogroup A / serotype 4A (strain DSM 15465 / Z2491)</name>
    <dbReference type="NCBI Taxonomy" id="122587"/>
    <lineage>
        <taxon>Bacteria</taxon>
        <taxon>Pseudomonadati</taxon>
        <taxon>Pseudomonadota</taxon>
        <taxon>Betaproteobacteria</taxon>
        <taxon>Neisseriales</taxon>
        <taxon>Neisseriaceae</taxon>
        <taxon>Neisseria</taxon>
    </lineage>
</organism>
<sequence length="397" mass="42547">MQNYLTPNFAFAPMIPERASGSRVWDTEGREYIDFSGGIAVNALGHCHPALVDALNAQMHKLWHISNIYTTRPAQELAQKLVANSFADKVFFCNSGSEANEAALKLARKYARDRFGGGKSEIVACINSFHGRTLFTVSVGGQPKYSKDYAPLPQGITHVPFNDIAALEAAVGEQTCAVIIEPIQGESGILPATAEYLQTARRLCDRHNALLILDEVQTGMGHTGRLFAYEHYGVVPDILSSAKALGCGFPIGAMLATETIAAAFQPGTHGSTFGGNPMACAVGSRAFDIINAPETLHNVRSQGQKLQTALLDLGRKTGLFSQVRGMGLLLGCVLDAPYRGRASEITAAALKHGVMILVAGADVLRFAPSLLLNDEDTAEGLRRLEHVLTEFAAANRP</sequence>
<accession>Q9JTX9</accession>
<accession>A1ISH2</accession>